<sequence length="92" mass="9783">MTTTQEKTRCTISGRVQGVCFRAATQEQAVRLGVTGYARNLRDGRVEVLACGPPEAVAQLREWLHEGPPAATVESVACEPADDPAPAEFSVG</sequence>
<comment type="catalytic activity">
    <reaction>
        <text>an acyl phosphate + H2O = a carboxylate + phosphate + H(+)</text>
        <dbReference type="Rhea" id="RHEA:14965"/>
        <dbReference type="ChEBI" id="CHEBI:15377"/>
        <dbReference type="ChEBI" id="CHEBI:15378"/>
        <dbReference type="ChEBI" id="CHEBI:29067"/>
        <dbReference type="ChEBI" id="CHEBI:43474"/>
        <dbReference type="ChEBI" id="CHEBI:59918"/>
        <dbReference type="EC" id="3.6.1.7"/>
    </reaction>
</comment>
<comment type="similarity">
    <text evidence="2">Belongs to the acylphosphatase family.</text>
</comment>
<organism>
    <name type="scientific">Halorhodospira halophila (strain DSM 244 / SL1)</name>
    <name type="common">Ectothiorhodospira halophila (strain DSM 244 / SL1)</name>
    <dbReference type="NCBI Taxonomy" id="349124"/>
    <lineage>
        <taxon>Bacteria</taxon>
        <taxon>Pseudomonadati</taxon>
        <taxon>Pseudomonadota</taxon>
        <taxon>Gammaproteobacteria</taxon>
        <taxon>Chromatiales</taxon>
        <taxon>Ectothiorhodospiraceae</taxon>
        <taxon>Halorhodospira</taxon>
    </lineage>
</organism>
<proteinExistence type="inferred from homology"/>
<accession>A1WUX3</accession>
<evidence type="ECO:0000255" key="1">
    <source>
        <dbReference type="PROSITE-ProRule" id="PRU00520"/>
    </source>
</evidence>
<evidence type="ECO:0000305" key="2"/>
<gene>
    <name type="primary">acyP</name>
    <name type="ordered locus">Hhal_0703</name>
</gene>
<protein>
    <recommendedName>
        <fullName>Acylphosphatase</fullName>
        <ecNumber>3.6.1.7</ecNumber>
    </recommendedName>
    <alternativeName>
        <fullName>Acylphosphate phosphohydrolase</fullName>
    </alternativeName>
</protein>
<feature type="chain" id="PRO_0000326721" description="Acylphosphatase">
    <location>
        <begin position="1"/>
        <end position="92"/>
    </location>
</feature>
<feature type="domain" description="Acylphosphatase-like" evidence="1">
    <location>
        <begin position="7"/>
        <end position="92"/>
    </location>
</feature>
<feature type="active site" evidence="1">
    <location>
        <position position="22"/>
    </location>
</feature>
<feature type="active site" evidence="1">
    <location>
        <position position="40"/>
    </location>
</feature>
<dbReference type="EC" id="3.6.1.7"/>
<dbReference type="EMBL" id="CP000544">
    <property type="protein sequence ID" value="ABM61485.1"/>
    <property type="molecule type" value="Genomic_DNA"/>
</dbReference>
<dbReference type="RefSeq" id="WP_011813508.1">
    <property type="nucleotide sequence ID" value="NC_008789.1"/>
</dbReference>
<dbReference type="SMR" id="A1WUX3"/>
<dbReference type="STRING" id="349124.Hhal_0703"/>
<dbReference type="KEGG" id="hha:Hhal_0703"/>
<dbReference type="eggNOG" id="COG1254">
    <property type="taxonomic scope" value="Bacteria"/>
</dbReference>
<dbReference type="HOGENOM" id="CLU_141932_1_2_6"/>
<dbReference type="OrthoDB" id="5295388at2"/>
<dbReference type="Proteomes" id="UP000000647">
    <property type="component" value="Chromosome"/>
</dbReference>
<dbReference type="GO" id="GO:0003998">
    <property type="term" value="F:acylphosphatase activity"/>
    <property type="evidence" value="ECO:0007669"/>
    <property type="project" value="UniProtKB-EC"/>
</dbReference>
<dbReference type="Gene3D" id="3.30.70.100">
    <property type="match status" value="1"/>
</dbReference>
<dbReference type="InterPro" id="IPR020456">
    <property type="entry name" value="Acylphosphatase"/>
</dbReference>
<dbReference type="InterPro" id="IPR001792">
    <property type="entry name" value="Acylphosphatase-like_dom"/>
</dbReference>
<dbReference type="InterPro" id="IPR036046">
    <property type="entry name" value="Acylphosphatase-like_dom_sf"/>
</dbReference>
<dbReference type="InterPro" id="IPR017968">
    <property type="entry name" value="Acylphosphatase_CS"/>
</dbReference>
<dbReference type="NCBIfam" id="NF011000">
    <property type="entry name" value="PRK14426.1"/>
    <property type="match status" value="1"/>
</dbReference>
<dbReference type="NCBIfam" id="NF011022">
    <property type="entry name" value="PRK14451.1"/>
    <property type="match status" value="1"/>
</dbReference>
<dbReference type="PANTHER" id="PTHR47268">
    <property type="entry name" value="ACYLPHOSPHATASE"/>
    <property type="match status" value="1"/>
</dbReference>
<dbReference type="PANTHER" id="PTHR47268:SF4">
    <property type="entry name" value="ACYLPHOSPHATASE"/>
    <property type="match status" value="1"/>
</dbReference>
<dbReference type="Pfam" id="PF00708">
    <property type="entry name" value="Acylphosphatase"/>
    <property type="match status" value="1"/>
</dbReference>
<dbReference type="PRINTS" id="PR00112">
    <property type="entry name" value="ACYLPHPHTASE"/>
</dbReference>
<dbReference type="SUPFAM" id="SSF54975">
    <property type="entry name" value="Acylphosphatase/BLUF domain-like"/>
    <property type="match status" value="1"/>
</dbReference>
<dbReference type="PROSITE" id="PS00150">
    <property type="entry name" value="ACYLPHOSPHATASE_1"/>
    <property type="match status" value="1"/>
</dbReference>
<dbReference type="PROSITE" id="PS00151">
    <property type="entry name" value="ACYLPHOSPHATASE_2"/>
    <property type="match status" value="1"/>
</dbReference>
<dbReference type="PROSITE" id="PS51160">
    <property type="entry name" value="ACYLPHOSPHATASE_3"/>
    <property type="match status" value="1"/>
</dbReference>
<keyword id="KW-0378">Hydrolase</keyword>
<keyword id="KW-1185">Reference proteome</keyword>
<name>ACYP_HALHL</name>
<reference key="1">
    <citation type="submission" date="2006-12" db="EMBL/GenBank/DDBJ databases">
        <title>Complete sequence of Halorhodospira halophila SL1.</title>
        <authorList>
            <consortium name="US DOE Joint Genome Institute"/>
            <person name="Copeland A."/>
            <person name="Lucas S."/>
            <person name="Lapidus A."/>
            <person name="Barry K."/>
            <person name="Detter J.C."/>
            <person name="Glavina del Rio T."/>
            <person name="Hammon N."/>
            <person name="Israni S."/>
            <person name="Dalin E."/>
            <person name="Tice H."/>
            <person name="Pitluck S."/>
            <person name="Saunders E."/>
            <person name="Brettin T."/>
            <person name="Bruce D."/>
            <person name="Han C."/>
            <person name="Tapia R."/>
            <person name="Schmutz J."/>
            <person name="Larimer F."/>
            <person name="Land M."/>
            <person name="Hauser L."/>
            <person name="Kyrpides N."/>
            <person name="Mikhailova N."/>
            <person name="Hoff W."/>
            <person name="Richardson P."/>
        </authorList>
    </citation>
    <scope>NUCLEOTIDE SEQUENCE [LARGE SCALE GENOMIC DNA]</scope>
    <source>
        <strain>DSM 244 / SL1</strain>
    </source>
</reference>